<evidence type="ECO:0000255" key="1">
    <source>
        <dbReference type="HAMAP-Rule" id="MF_01866"/>
    </source>
</evidence>
<feature type="chain" id="PRO_0000375384" description="Protein YcgL">
    <location>
        <begin position="1"/>
        <end position="108"/>
    </location>
</feature>
<feature type="domain" description="YcgL" evidence="1">
    <location>
        <begin position="12"/>
        <end position="96"/>
    </location>
</feature>
<reference key="1">
    <citation type="journal article" date="2005" name="Nucleic Acids Res.">
        <title>Genome dynamics and diversity of Shigella species, the etiologic agents of bacillary dysentery.</title>
        <authorList>
            <person name="Yang F."/>
            <person name="Yang J."/>
            <person name="Zhang X."/>
            <person name="Chen L."/>
            <person name="Jiang Y."/>
            <person name="Yan Y."/>
            <person name="Tang X."/>
            <person name="Wang J."/>
            <person name="Xiong Z."/>
            <person name="Dong J."/>
            <person name="Xue Y."/>
            <person name="Zhu Y."/>
            <person name="Xu X."/>
            <person name="Sun L."/>
            <person name="Chen S."/>
            <person name="Nie H."/>
            <person name="Peng J."/>
            <person name="Xu J."/>
            <person name="Wang Y."/>
            <person name="Yuan Z."/>
            <person name="Wen Y."/>
            <person name="Yao Z."/>
            <person name="Shen Y."/>
            <person name="Qiang B."/>
            <person name="Hou Y."/>
            <person name="Yu J."/>
            <person name="Jin Q."/>
        </authorList>
    </citation>
    <scope>NUCLEOTIDE SEQUENCE [LARGE SCALE GENOMIC DNA]</scope>
    <source>
        <strain>Sd197</strain>
    </source>
</reference>
<sequence length="108" mass="12421">MPKLGILKSKSMFCVIYRSSKRDQTYLYVEKKDDFSRVPEELMKGFGQPQLAMILPLDGRKKLVNADIEKVKQALTEQGYYLQLPPSPEDLLKQHLSVMGQKTDDTNK</sequence>
<name>YCGL_SHIDS</name>
<accession>Q32H41</accession>
<protein>
    <recommendedName>
        <fullName evidence="1">Protein YcgL</fullName>
    </recommendedName>
</protein>
<dbReference type="EMBL" id="CP000034">
    <property type="protein sequence ID" value="ABB61364.1"/>
    <property type="molecule type" value="Genomic_DNA"/>
</dbReference>
<dbReference type="RefSeq" id="YP_402855.1">
    <property type="nucleotide sequence ID" value="NC_007606.1"/>
</dbReference>
<dbReference type="SMR" id="Q32H41"/>
<dbReference type="STRING" id="300267.SDY_1211"/>
<dbReference type="EnsemblBacteria" id="ABB61364">
    <property type="protein sequence ID" value="ABB61364"/>
    <property type="gene ID" value="SDY_1211"/>
</dbReference>
<dbReference type="KEGG" id="sdy:SDY_1211"/>
<dbReference type="PATRIC" id="fig|300267.13.peg.1437"/>
<dbReference type="HOGENOM" id="CLU_155118_1_0_6"/>
<dbReference type="Proteomes" id="UP000002716">
    <property type="component" value="Chromosome"/>
</dbReference>
<dbReference type="Gene3D" id="3.10.510.20">
    <property type="entry name" value="YcgL domain"/>
    <property type="match status" value="1"/>
</dbReference>
<dbReference type="HAMAP" id="MF_01866">
    <property type="entry name" value="UPF0745"/>
    <property type="match status" value="1"/>
</dbReference>
<dbReference type="InterPro" id="IPR038068">
    <property type="entry name" value="YcgL-like_sf"/>
</dbReference>
<dbReference type="InterPro" id="IPR027354">
    <property type="entry name" value="YcgL_dom"/>
</dbReference>
<dbReference type="PANTHER" id="PTHR38109">
    <property type="entry name" value="PROTEIN YCGL"/>
    <property type="match status" value="1"/>
</dbReference>
<dbReference type="PANTHER" id="PTHR38109:SF1">
    <property type="entry name" value="PROTEIN YCGL"/>
    <property type="match status" value="1"/>
</dbReference>
<dbReference type="Pfam" id="PF05166">
    <property type="entry name" value="YcgL"/>
    <property type="match status" value="1"/>
</dbReference>
<dbReference type="SUPFAM" id="SSF160191">
    <property type="entry name" value="YcgL-like"/>
    <property type="match status" value="1"/>
</dbReference>
<dbReference type="PROSITE" id="PS51648">
    <property type="entry name" value="YCGL"/>
    <property type="match status" value="1"/>
</dbReference>
<gene>
    <name evidence="1" type="primary">ycgL</name>
    <name type="ordered locus">SDY_1211</name>
</gene>
<keyword id="KW-1185">Reference proteome</keyword>
<proteinExistence type="inferred from homology"/>
<organism>
    <name type="scientific">Shigella dysenteriae serotype 1 (strain Sd197)</name>
    <dbReference type="NCBI Taxonomy" id="300267"/>
    <lineage>
        <taxon>Bacteria</taxon>
        <taxon>Pseudomonadati</taxon>
        <taxon>Pseudomonadota</taxon>
        <taxon>Gammaproteobacteria</taxon>
        <taxon>Enterobacterales</taxon>
        <taxon>Enterobacteriaceae</taxon>
        <taxon>Shigella</taxon>
    </lineage>
</organism>